<evidence type="ECO:0000250" key="1">
    <source>
        <dbReference type="UniProtKB" id="Q8NFZ0"/>
    </source>
</evidence>
<evidence type="ECO:0000255" key="2">
    <source>
        <dbReference type="PROSITE-ProRule" id="PRU00080"/>
    </source>
</evidence>
<evidence type="ECO:0000255" key="3">
    <source>
        <dbReference type="PROSITE-ProRule" id="PRU00560"/>
    </source>
</evidence>
<evidence type="ECO:0000256" key="4">
    <source>
        <dbReference type="SAM" id="MobiDB-lite"/>
    </source>
</evidence>
<evidence type="ECO:0000269" key="5">
    <source>
    </source>
</evidence>
<evidence type="ECO:0000303" key="6">
    <source>
    </source>
</evidence>
<evidence type="ECO:0000305" key="7"/>
<keyword id="KW-0067">ATP-binding</keyword>
<keyword id="KW-0158">Chromosome</keyword>
<keyword id="KW-0227">DNA damage</keyword>
<keyword id="KW-0234">DNA repair</keyword>
<keyword id="KW-0238">DNA-binding</keyword>
<keyword id="KW-0347">Helicase</keyword>
<keyword id="KW-0378">Hydrolase</keyword>
<keyword id="KW-0413">Isomerase</keyword>
<keyword id="KW-0547">Nucleotide-binding</keyword>
<keyword id="KW-0539">Nucleus</keyword>
<keyword id="KW-1185">Reference proteome</keyword>
<keyword id="KW-0833">Ubl conjugation pathway</keyword>
<protein>
    <recommendedName>
        <fullName evidence="6">F-box DNA helicase 1</fullName>
        <ecNumber evidence="1">5.6.2.4</ecNumber>
    </recommendedName>
    <alternativeName>
        <fullName evidence="7">DNA 3'-5' helicase 1</fullName>
    </alternativeName>
    <alternativeName>
        <fullName>F-box only protein 18</fullName>
    </alternativeName>
</protein>
<reference key="1">
    <citation type="journal article" date="2007" name="Mol. Cell. Biol.">
        <title>Cooperative roles of vertebrate Fbh1 and Blm DNA helicases in avoidance of crossovers during recombination initiated by replication fork collapse.</title>
        <authorList>
            <person name="Kohzaki M."/>
            <person name="Hatanaka A."/>
            <person name="Sonoda E."/>
            <person name="Yamazoe M."/>
            <person name="Kikuchi K."/>
            <person name="Vu Trung N."/>
            <person name="Szuts D."/>
            <person name="Sale J.E."/>
            <person name="Shinagawa H."/>
            <person name="Watanabe M."/>
            <person name="Takeda S."/>
        </authorList>
    </citation>
    <scope>NUCLEOTIDE SEQUENCE [MRNA]</scope>
    <scope>FUNCTION</scope>
</reference>
<reference key="2">
    <citation type="journal article" date="2004" name="Nature">
        <title>Sequence and comparative analysis of the chicken genome provide unique perspectives on vertebrate evolution.</title>
        <authorList>
            <person name="Hillier L.W."/>
            <person name="Miller W."/>
            <person name="Birney E."/>
            <person name="Warren W."/>
            <person name="Hardison R.C."/>
            <person name="Ponting C.P."/>
            <person name="Bork P."/>
            <person name="Burt D.W."/>
            <person name="Groenen M.A.M."/>
            <person name="Delany M.E."/>
            <person name="Dodgson J.B."/>
            <person name="Chinwalla A.T."/>
            <person name="Cliften P.F."/>
            <person name="Clifton S.W."/>
            <person name="Delehaunty K.D."/>
            <person name="Fronick C."/>
            <person name="Fulton R.S."/>
            <person name="Graves T.A."/>
            <person name="Kremitzki C."/>
            <person name="Layman D."/>
            <person name="Magrini V."/>
            <person name="McPherson J.D."/>
            <person name="Miner T.L."/>
            <person name="Minx P."/>
            <person name="Nash W.E."/>
            <person name="Nhan M.N."/>
            <person name="Nelson J.O."/>
            <person name="Oddy L.G."/>
            <person name="Pohl C.S."/>
            <person name="Randall-Maher J."/>
            <person name="Smith S.M."/>
            <person name="Wallis J.W."/>
            <person name="Yang S.-P."/>
            <person name="Romanov M.N."/>
            <person name="Rondelli C.M."/>
            <person name="Paton B."/>
            <person name="Smith J."/>
            <person name="Morrice D."/>
            <person name="Daniels L."/>
            <person name="Tempest H.G."/>
            <person name="Robertson L."/>
            <person name="Masabanda J.S."/>
            <person name="Griffin D.K."/>
            <person name="Vignal A."/>
            <person name="Fillon V."/>
            <person name="Jacobbson L."/>
            <person name="Kerje S."/>
            <person name="Andersson L."/>
            <person name="Crooijmans R.P."/>
            <person name="Aerts J."/>
            <person name="van der Poel J.J."/>
            <person name="Ellegren H."/>
            <person name="Caldwell R.B."/>
            <person name="Hubbard S.J."/>
            <person name="Grafham D.V."/>
            <person name="Kierzek A.M."/>
            <person name="McLaren S.R."/>
            <person name="Overton I.M."/>
            <person name="Arakawa H."/>
            <person name="Beattie K.J."/>
            <person name="Bezzubov Y."/>
            <person name="Boardman P.E."/>
            <person name="Bonfield J.K."/>
            <person name="Croning M.D.R."/>
            <person name="Davies R.M."/>
            <person name="Francis M.D."/>
            <person name="Humphray S.J."/>
            <person name="Scott C.E."/>
            <person name="Taylor R.G."/>
            <person name="Tickle C."/>
            <person name="Brown W.R.A."/>
            <person name="Rogers J."/>
            <person name="Buerstedde J.-M."/>
            <person name="Wilson S.A."/>
            <person name="Stubbs L."/>
            <person name="Ovcharenko I."/>
            <person name="Gordon L."/>
            <person name="Lucas S."/>
            <person name="Miller M.M."/>
            <person name="Inoko H."/>
            <person name="Shiina T."/>
            <person name="Kaufman J."/>
            <person name="Salomonsen J."/>
            <person name="Skjoedt K."/>
            <person name="Wong G.K.-S."/>
            <person name="Wang J."/>
            <person name="Liu B."/>
            <person name="Wang J."/>
            <person name="Yu J."/>
            <person name="Yang H."/>
            <person name="Nefedov M."/>
            <person name="Koriabine M."/>
            <person name="Dejong P.J."/>
            <person name="Goodstadt L."/>
            <person name="Webber C."/>
            <person name="Dickens N.J."/>
            <person name="Letunic I."/>
            <person name="Suyama M."/>
            <person name="Torrents D."/>
            <person name="von Mering C."/>
            <person name="Zdobnov E.M."/>
            <person name="Makova K."/>
            <person name="Nekrutenko A."/>
            <person name="Elnitski L."/>
            <person name="Eswara P."/>
            <person name="King D.C."/>
            <person name="Yang S.-P."/>
            <person name="Tyekucheva S."/>
            <person name="Radakrishnan A."/>
            <person name="Harris R.S."/>
            <person name="Chiaromonte F."/>
            <person name="Taylor J."/>
            <person name="He J."/>
            <person name="Rijnkels M."/>
            <person name="Griffiths-Jones S."/>
            <person name="Ureta-Vidal A."/>
            <person name="Hoffman M.M."/>
            <person name="Severin J."/>
            <person name="Searle S.M.J."/>
            <person name="Law A.S."/>
            <person name="Speed D."/>
            <person name="Waddington D."/>
            <person name="Cheng Z."/>
            <person name="Tuzun E."/>
            <person name="Eichler E."/>
            <person name="Bao Z."/>
            <person name="Flicek P."/>
            <person name="Shteynberg D.D."/>
            <person name="Brent M.R."/>
            <person name="Bye J.M."/>
            <person name="Huckle E.J."/>
            <person name="Chatterji S."/>
            <person name="Dewey C."/>
            <person name="Pachter L."/>
            <person name="Kouranov A."/>
            <person name="Mourelatos Z."/>
            <person name="Hatzigeorgiou A.G."/>
            <person name="Paterson A.H."/>
            <person name="Ivarie R."/>
            <person name="Brandstrom M."/>
            <person name="Axelsson E."/>
            <person name="Backstrom N."/>
            <person name="Berlin S."/>
            <person name="Webster M.T."/>
            <person name="Pourquie O."/>
            <person name="Reymond A."/>
            <person name="Ucla C."/>
            <person name="Antonarakis S.E."/>
            <person name="Long M."/>
            <person name="Emerson J.J."/>
            <person name="Betran E."/>
            <person name="Dupanloup I."/>
            <person name="Kaessmann H."/>
            <person name="Hinrichs A.S."/>
            <person name="Bejerano G."/>
            <person name="Furey T.S."/>
            <person name="Harte R.A."/>
            <person name="Raney B."/>
            <person name="Siepel A."/>
            <person name="Kent W.J."/>
            <person name="Haussler D."/>
            <person name="Eyras E."/>
            <person name="Castelo R."/>
            <person name="Abril J.F."/>
            <person name="Castellano S."/>
            <person name="Camara F."/>
            <person name="Parra G."/>
            <person name="Guigo R."/>
            <person name="Bourque G."/>
            <person name="Tesler G."/>
            <person name="Pevzner P.A."/>
            <person name="Smit A."/>
            <person name="Fulton L.A."/>
            <person name="Mardis E.R."/>
            <person name="Wilson R.K."/>
        </authorList>
    </citation>
    <scope>NUCLEOTIDE SEQUENCE [LARGE SCALE GENOMIC DNA]</scope>
    <source>
        <strain>Red jungle fowl</strain>
    </source>
</reference>
<accession>F1ND48</accession>
<accession>A1YKW0</accession>
<dbReference type="EC" id="5.6.2.4" evidence="1"/>
<dbReference type="EMBL" id="EF066526">
    <property type="protein sequence ID" value="ABM05617.1"/>
    <property type="molecule type" value="mRNA"/>
</dbReference>
<dbReference type="EMBL" id="AADN03001147">
    <property type="status" value="NOT_ANNOTATED_CDS"/>
    <property type="molecule type" value="Genomic_DNA"/>
</dbReference>
<dbReference type="RefSeq" id="NP_001073679.1">
    <property type="nucleotide sequence ID" value="NM_001080210.1"/>
</dbReference>
<dbReference type="RefSeq" id="XP_015139126.1">
    <property type="nucleotide sequence ID" value="XM_015283640.1"/>
</dbReference>
<dbReference type="FunCoup" id="F1ND48">
    <property type="interactions" value="1771"/>
</dbReference>
<dbReference type="STRING" id="9031.ENSGALP00000071707"/>
<dbReference type="GlyGen" id="F1ND48">
    <property type="glycosylation" value="1 site"/>
</dbReference>
<dbReference type="PaxDb" id="9031-ENSGALP00000013249"/>
<dbReference type="GeneID" id="416687"/>
<dbReference type="KEGG" id="gga:416687"/>
<dbReference type="CTD" id="567995"/>
<dbReference type="VEuPathDB" id="HostDB:geneid_416687"/>
<dbReference type="eggNOG" id="KOG2108">
    <property type="taxonomic scope" value="Eukaryota"/>
</dbReference>
<dbReference type="HOGENOM" id="CLU_009740_0_0_1"/>
<dbReference type="InParanoid" id="F1ND48"/>
<dbReference type="OrthoDB" id="1470711at2759"/>
<dbReference type="TreeFam" id="TF329020"/>
<dbReference type="UniPathway" id="UPA00143"/>
<dbReference type="PRO" id="PR:F1ND48"/>
<dbReference type="Proteomes" id="UP000000539">
    <property type="component" value="Unassembled WGS sequence"/>
</dbReference>
<dbReference type="GO" id="GO:0000785">
    <property type="term" value="C:chromatin"/>
    <property type="evidence" value="ECO:0000250"/>
    <property type="project" value="UniProtKB"/>
</dbReference>
<dbReference type="GO" id="GO:0005634">
    <property type="term" value="C:nucleus"/>
    <property type="evidence" value="ECO:0000250"/>
    <property type="project" value="UniProtKB"/>
</dbReference>
<dbReference type="GO" id="GO:0019005">
    <property type="term" value="C:SCF ubiquitin ligase complex"/>
    <property type="evidence" value="ECO:0000250"/>
    <property type="project" value="UniProtKB"/>
</dbReference>
<dbReference type="GO" id="GO:0043138">
    <property type="term" value="F:3'-5' DNA helicase activity"/>
    <property type="evidence" value="ECO:0000250"/>
    <property type="project" value="UniProtKB"/>
</dbReference>
<dbReference type="GO" id="GO:0005524">
    <property type="term" value="F:ATP binding"/>
    <property type="evidence" value="ECO:0007669"/>
    <property type="project" value="UniProtKB-KW"/>
</dbReference>
<dbReference type="GO" id="GO:0016887">
    <property type="term" value="F:ATP hydrolysis activity"/>
    <property type="evidence" value="ECO:0007669"/>
    <property type="project" value="RHEA"/>
</dbReference>
<dbReference type="GO" id="GO:0003678">
    <property type="term" value="F:DNA helicase activity"/>
    <property type="evidence" value="ECO:0000250"/>
    <property type="project" value="UniProtKB"/>
</dbReference>
<dbReference type="GO" id="GO:0003690">
    <property type="term" value="F:double-stranded DNA binding"/>
    <property type="evidence" value="ECO:0000250"/>
    <property type="project" value="UniProtKB"/>
</dbReference>
<dbReference type="GO" id="GO:0003697">
    <property type="term" value="F:single-stranded DNA binding"/>
    <property type="evidence" value="ECO:0000250"/>
    <property type="project" value="UniProtKB"/>
</dbReference>
<dbReference type="GO" id="GO:0006974">
    <property type="term" value="P:DNA damage response"/>
    <property type="evidence" value="ECO:0000250"/>
    <property type="project" value="UniProtKB"/>
</dbReference>
<dbReference type="GO" id="GO:0000724">
    <property type="term" value="P:double-strand break repair via homologous recombination"/>
    <property type="evidence" value="ECO:0000315"/>
    <property type="project" value="UniProtKB"/>
</dbReference>
<dbReference type="GO" id="GO:2000042">
    <property type="term" value="P:negative regulation of double-strand break repair via homologous recombination"/>
    <property type="evidence" value="ECO:0000250"/>
    <property type="project" value="UniProtKB"/>
</dbReference>
<dbReference type="GO" id="GO:0016567">
    <property type="term" value="P:protein ubiquitination"/>
    <property type="evidence" value="ECO:0000250"/>
    <property type="project" value="UniProtKB"/>
</dbReference>
<dbReference type="GO" id="GO:0031297">
    <property type="term" value="P:replication fork processing"/>
    <property type="evidence" value="ECO:0000315"/>
    <property type="project" value="UniProtKB"/>
</dbReference>
<dbReference type="CDD" id="cd22095">
    <property type="entry name" value="F-box_FBXO18"/>
    <property type="match status" value="1"/>
</dbReference>
<dbReference type="FunFam" id="1.20.1280.50:FF:000011">
    <property type="entry name" value="F-box DNA helicase 1"/>
    <property type="match status" value="1"/>
</dbReference>
<dbReference type="FunFam" id="3.40.50.300:FF:003679">
    <property type="entry name" value="F-box DNA helicase 1"/>
    <property type="match status" value="1"/>
</dbReference>
<dbReference type="Gene3D" id="1.20.1280.50">
    <property type="match status" value="1"/>
</dbReference>
<dbReference type="Gene3D" id="3.40.50.300">
    <property type="entry name" value="P-loop containing nucleotide triphosphate hydrolases"/>
    <property type="match status" value="2"/>
</dbReference>
<dbReference type="InterPro" id="IPR014017">
    <property type="entry name" value="DNA_helicase_UvrD-like_C"/>
</dbReference>
<dbReference type="InterPro" id="IPR000212">
    <property type="entry name" value="DNA_helicase_UvrD/REP"/>
</dbReference>
<dbReference type="InterPro" id="IPR036047">
    <property type="entry name" value="F-box-like_dom_sf"/>
</dbReference>
<dbReference type="InterPro" id="IPR001810">
    <property type="entry name" value="F-box_dom"/>
</dbReference>
<dbReference type="InterPro" id="IPR027417">
    <property type="entry name" value="P-loop_NTPase"/>
</dbReference>
<dbReference type="InterPro" id="IPR014016">
    <property type="entry name" value="UvrD-like_ATP-bd"/>
</dbReference>
<dbReference type="PANTHER" id="PTHR11070:SF30">
    <property type="entry name" value="F-BOX DNA HELICASE 1"/>
    <property type="match status" value="1"/>
</dbReference>
<dbReference type="PANTHER" id="PTHR11070">
    <property type="entry name" value="UVRD / RECB / PCRA DNA HELICASE FAMILY MEMBER"/>
    <property type="match status" value="1"/>
</dbReference>
<dbReference type="Pfam" id="PF12937">
    <property type="entry name" value="F-box-like"/>
    <property type="match status" value="1"/>
</dbReference>
<dbReference type="Pfam" id="PF00580">
    <property type="entry name" value="UvrD-helicase"/>
    <property type="match status" value="1"/>
</dbReference>
<dbReference type="Pfam" id="PF13361">
    <property type="entry name" value="UvrD_C"/>
    <property type="match status" value="1"/>
</dbReference>
<dbReference type="SMART" id="SM00256">
    <property type="entry name" value="FBOX"/>
    <property type="match status" value="1"/>
</dbReference>
<dbReference type="SUPFAM" id="SSF81383">
    <property type="entry name" value="F-box domain"/>
    <property type="match status" value="1"/>
</dbReference>
<dbReference type="SUPFAM" id="SSF52540">
    <property type="entry name" value="P-loop containing nucleoside triphosphate hydrolases"/>
    <property type="match status" value="1"/>
</dbReference>
<dbReference type="PROSITE" id="PS50181">
    <property type="entry name" value="FBOX"/>
    <property type="match status" value="1"/>
</dbReference>
<organism>
    <name type="scientific">Gallus gallus</name>
    <name type="common">Chicken</name>
    <dbReference type="NCBI Taxonomy" id="9031"/>
    <lineage>
        <taxon>Eukaryota</taxon>
        <taxon>Metazoa</taxon>
        <taxon>Chordata</taxon>
        <taxon>Craniata</taxon>
        <taxon>Vertebrata</taxon>
        <taxon>Euteleostomi</taxon>
        <taxon>Archelosauria</taxon>
        <taxon>Archosauria</taxon>
        <taxon>Dinosauria</taxon>
        <taxon>Saurischia</taxon>
        <taxon>Theropoda</taxon>
        <taxon>Coelurosauria</taxon>
        <taxon>Aves</taxon>
        <taxon>Neognathae</taxon>
        <taxon>Galloanserae</taxon>
        <taxon>Galliformes</taxon>
        <taxon>Phasianidae</taxon>
        <taxon>Phasianinae</taxon>
        <taxon>Gallus</taxon>
    </lineage>
</organism>
<sequence>MHLTADDCEALSRSTEGLSSLTQPLNQRRSRGDVNRGLQPTHRTRTQPGAQGRQKNIMDYFKVSQRQQAVAGRTKDISIKEEVLDPFFAEDDESSISSVMETSGDSSSFLENEYMGNSRKRPLSSTAPGRLQIENDLWGEPEKKAVVVHPEHSQIKQELDDEIEIEPVPDSHYGLLGTRNWEVPQGSIEDLPDEVLRSIFAFLPVTDLYQSLSLVCRRWRIIVGDPWFIPWKKLYHQYLVKEDMALRRVEQVLQDFAITGQHKECILGLIRCVSTIPTSRNVDPSAVLQCLKGHHLFSRAEVCITNKLPHLQSKTGPEYMWAIITAMVLFSDGVRDIQRLMACLQRPCSSLSIVDVTETLYCIATLLYAMREKNINITNRIHYNIFYCLYLMENASVTAPQVVEEETPSSRCRQDFWSSSLSEVKLTHEQQRILNHKIERGQIVKIMAFAGTGKTSTLVKYAEKFADLSFLYVTFNKAVAERGRLVFPRNVTCKTFHSLAFGSVGKLYKEKGKLNFSKLSAYSVSFLIQNREGQSIFIRGKTVSQTLENFFASSDEEICEEHTPVWFKNTHGERKLVTPEEKRINVEEAKEIWRNMKKLDGDVERKYKITCDGYLKLWQLSKPQLSGYDAIFVDEAQDCTPAIVDIVLSQTCGVILVGDPHQQIYSFRGAVNTLYTVPHTHIYYLTQSFRFGPEIAYVGATILDVCKGIRNKTLVGGNQEGDVRGSMEGKITMLSRSNFTVFEDAAKLAGRERQIKIHIIGGLVRFGLSKIYDIWKLSQPADEREKANLVINDSFIKRWEENEGFIGLKDYATRVDDKELEMKIRIVEKFKERIPELVQKIESSHVLQEAMADYLIGTVHQAKGLEFDTVLIADDFVDVPCARDNNQRRPQFIIGMCPEDEWNLLYVAVTRAKKCLLMSQSLEHLLALAGEHFLRVELMGEAVKTGVACSTQQCTQTLQSGIRLVVKKLPLIHSNGSRDMGGYLCYSCVQKRFGSMTPLAFLPALQEEPIVL</sequence>
<comment type="function">
    <text evidence="1 5">3'-5' DNA helicase and substrate-recognition component of the SCF(FBH1) E3 ubiquitin ligase complex that plays a key role in response to stalled/damaged replication forks (By similarity). Involved in genome maintenance by acting as an anti-recombinogenic helicase and preventing extensive strand exchange during homologous recombination: promotes RAD51 filament dissolution from stalled forks, thereby inhibiting homologous recombination and preventing excessive recombination (PubMed:17283053). Also promotes cell death and DNA double-strand breakage in response to replication stress: promotes the endonucleolytic DNA cleavage following prolonged replication stress via its helicase activity, possibly to eliminate cells with excessive replication stress.</text>
</comment>
<comment type="catalytic activity">
    <reaction>
        <text>Couples ATP hydrolysis with the unwinding of duplex DNA by translocating in the 3'-5' direction.</text>
        <dbReference type="EC" id="5.6.2.4"/>
    </reaction>
</comment>
<comment type="catalytic activity">
    <reaction evidence="1">
        <text>ATP + H2O = ADP + phosphate + H(+)</text>
        <dbReference type="Rhea" id="RHEA:13065"/>
        <dbReference type="ChEBI" id="CHEBI:15377"/>
        <dbReference type="ChEBI" id="CHEBI:15378"/>
        <dbReference type="ChEBI" id="CHEBI:30616"/>
        <dbReference type="ChEBI" id="CHEBI:43474"/>
        <dbReference type="ChEBI" id="CHEBI:456216"/>
        <dbReference type="EC" id="5.6.2.4"/>
    </reaction>
</comment>
<comment type="pathway">
    <text evidence="1">Protein modification; protein ubiquitination.</text>
</comment>
<comment type="subunit">
    <text evidence="1">Part of the SCF (SKP1-CUL1-F-box) E3 ubiquitin-protein ligase complex SCF(FBH1) (By similarity).</text>
</comment>
<comment type="subcellular location">
    <subcellularLocation>
        <location evidence="1">Nucleus</location>
    </subcellularLocation>
    <subcellularLocation>
        <location evidence="1">Chromosome</location>
    </subcellularLocation>
    <text evidence="1">Accumulates at sites of DNA damage or replication stress. Localizes to the nucleoplasm in absence of DNA damage.</text>
</comment>
<comment type="similarity">
    <text evidence="7">Belongs to the helicase family. UvrD subfamily.</text>
</comment>
<gene>
    <name evidence="6" type="primary">FBH1</name>
    <name type="synonym">FBX18</name>
    <name type="synonym">FBXO18</name>
</gene>
<feature type="chain" id="PRO_0000434112" description="F-box DNA helicase 1">
    <location>
        <begin position="1"/>
        <end position="1012"/>
    </location>
</feature>
<feature type="domain" description="F-box" evidence="2">
    <location>
        <begin position="185"/>
        <end position="234"/>
    </location>
</feature>
<feature type="domain" description="UvrD-like helicase ATP-binding" evidence="3">
    <location>
        <begin position="427"/>
        <end position="692"/>
    </location>
</feature>
<feature type="region of interest" description="Disordered" evidence="4">
    <location>
        <begin position="1"/>
        <end position="54"/>
    </location>
</feature>
<feature type="compositionally biased region" description="Polar residues" evidence="4">
    <location>
        <begin position="12"/>
        <end position="27"/>
    </location>
</feature>
<feature type="binding site" evidence="3">
    <location>
        <begin position="448"/>
        <end position="455"/>
    </location>
    <ligand>
        <name>ATP</name>
        <dbReference type="ChEBI" id="CHEBI:30616"/>
    </ligand>
</feature>
<feature type="sequence conflict" description="In Ref. 1; ABM05617." evidence="7" ref="1">
    <original>N</original>
    <variation>D</variation>
    <location>
        <position position="112"/>
    </location>
</feature>
<feature type="sequence conflict" description="In Ref. 1; ABM05617." evidence="7" ref="1">
    <original>V</original>
    <variation>I</variation>
    <location>
        <position position="565"/>
    </location>
</feature>
<feature type="sequence conflict" description="In Ref. 1; ABM05617." evidence="7" ref="1">
    <original>T</original>
    <variation>A</variation>
    <location>
        <position position="951"/>
    </location>
</feature>
<proteinExistence type="evidence at transcript level"/>
<name>FBH1_CHICK</name>